<comment type="function">
    <text evidence="4 5 6 11 12 14 15">S-adenosyl-L-methionine-dependent rRNA methyltransferase which may methylate two specific adjacent adenosines in the loop of a conserved hairpin near the 3'-end of 12S mitochondrial rRNA (Probable). Component of the mitochondrial transcription initiation complex, composed at least of TFB2M, TFAM and POLRMT that is required for basal transcription of mitochondrial DNA (PubMed:12068295, PubMed:15526033, PubMed:20410300, PubMed:29149603). In this complex, TFAM recruits POLRMT to a specific promoter whereas TFB2M induces structural changes in POLRMT to enable promoter opening and trapping of the DNA non-template strand (PubMed:15526033, PubMed:29149603). Stimulates transcription independently of the methyltransferase activity (PubMed:12897151).</text>
</comment>
<comment type="catalytic activity">
    <reaction evidence="15">
        <text>adenosine in rRNA + S-adenosyl-L-methionine = N(6)-methyladenosine in rRNA + S-adenosyl-L-homocysteine + H(+)</text>
        <dbReference type="Rhea" id="RHEA:58728"/>
        <dbReference type="Rhea" id="RHEA-COMP:15198"/>
        <dbReference type="Rhea" id="RHEA-COMP:15199"/>
        <dbReference type="ChEBI" id="CHEBI:15378"/>
        <dbReference type="ChEBI" id="CHEBI:57856"/>
        <dbReference type="ChEBI" id="CHEBI:59789"/>
        <dbReference type="ChEBI" id="CHEBI:74411"/>
        <dbReference type="ChEBI" id="CHEBI:74449"/>
    </reaction>
</comment>
<comment type="subunit">
    <text evidence="4 5 12">Homodimer (PubMed:29149603). Component of the mitochondrial transcription initiation complex, composed at least of TFB2M, TFAM and POLRMT (PubMed:29149603). In this complex TFAM recruits POLRMT to the promoter whereas TFB2M induces structural changes in POLRMT to enable promoter opening and trapping of the DNA non-template strand (PubMed:29149603). Interacts with mitochondrial RNA polymerase POLRMT (PubMed:12068295). Interacts with TFAM (PubMed:12897151).</text>
</comment>
<comment type="subcellular location">
    <subcellularLocation>
        <location>Mitochondrion</location>
    </subcellularLocation>
</comment>
<comment type="tissue specificity">
    <text evidence="4">Ubiquitously expressed.</text>
</comment>
<comment type="induction">
    <text evidence="7">By the nuclear respiratory factors NRF1 and NRF2/GABPB2 and PGC-1 coactivators.</text>
</comment>
<comment type="similarity">
    <text evidence="2">Belongs to the class I-like SAM-binding methyltransferase superfamily. rRNA adenine N(6)-methyltransferase family. KsgA subfamily.</text>
</comment>
<comment type="sequence caution" evidence="13">
    <conflict type="erroneous initiation">
        <sequence resource="EMBL-CDS" id="BAB15441"/>
    </conflict>
</comment>
<feature type="transit peptide" description="Mitochondrion" evidence="1">
    <location>
        <begin position="1"/>
        <end position="19"/>
    </location>
</feature>
<feature type="chain" id="PRO_0000273179" description="Dimethyladenosine transferase 2, mitochondrial">
    <location>
        <begin position="20"/>
        <end position="396"/>
    </location>
</feature>
<feature type="region of interest" description="Disordered" evidence="3">
    <location>
        <begin position="44"/>
        <end position="64"/>
    </location>
</feature>
<feature type="region of interest" description="DNA-binding" evidence="12 18 19">
    <location>
        <begin position="330"/>
        <end position="331"/>
    </location>
</feature>
<feature type="binding site" evidence="2">
    <location>
        <position position="75"/>
    </location>
    <ligand>
        <name>S-adenosyl-L-methionine</name>
        <dbReference type="ChEBI" id="CHEBI:59789"/>
    </ligand>
</feature>
<feature type="binding site" evidence="2">
    <location>
        <position position="124"/>
    </location>
    <ligand>
        <name>S-adenosyl-L-methionine</name>
        <dbReference type="ChEBI" id="CHEBI:59789"/>
    </ligand>
</feature>
<feature type="binding site" evidence="2">
    <location>
        <position position="150"/>
    </location>
    <ligand>
        <name>S-adenosyl-L-methionine</name>
        <dbReference type="ChEBI" id="CHEBI:59789"/>
    </ligand>
</feature>
<feature type="sequence variant" id="VAR_071249" description="In dbSNP:rs148620105." evidence="9">
    <original>S</original>
    <variation>F</variation>
    <location>
        <position position="48"/>
    </location>
</feature>
<feature type="sequence variant" id="VAR_071250" description="In dbSNP:rs143880306." evidence="9 10">
    <original>A</original>
    <variation>T</variation>
    <location>
        <position position="64"/>
    </location>
</feature>
<feature type="sequence variant" id="VAR_030097" description="In dbSNP:rs11585481.">
    <original>P</original>
    <variation>L</variation>
    <location>
        <position position="156"/>
    </location>
</feature>
<feature type="sequence variant" id="VAR_030098" description="In dbSNP:rs12037377." evidence="10">
    <original>H</original>
    <variation>Y</variation>
    <location>
        <position position="264"/>
    </location>
</feature>
<feature type="mutagenesis site" description="Abolishes methyltransferase activity." evidence="8">
    <original>G</original>
    <variation>A</variation>
    <location>
        <position position="105"/>
    </location>
</feature>
<feature type="mutagenesis site" description="Impairs transcription initiation; when associated with A-331." evidence="12">
    <original>R</original>
    <variation>A</variation>
    <location>
        <position position="330"/>
    </location>
</feature>
<feature type="mutagenesis site" description="Impairs transcription initiation; when associated with A-330." evidence="12">
    <original>R</original>
    <variation>A</variation>
    <location>
        <position position="331"/>
    </location>
</feature>
<feature type="sequence conflict" description="In Ref. 2; BAB15441." evidence="13" ref="2">
    <original>EK</original>
    <variation>GR</variation>
    <location>
        <begin position="200"/>
        <end position="201"/>
    </location>
</feature>
<feature type="helix" evidence="20">
    <location>
        <begin position="78"/>
        <end position="89"/>
    </location>
</feature>
<feature type="strand" evidence="20">
    <location>
        <begin position="99"/>
        <end position="102"/>
    </location>
</feature>
<feature type="helix" evidence="20">
    <location>
        <begin position="108"/>
        <end position="115"/>
    </location>
</feature>
<feature type="strand" evidence="20">
    <location>
        <begin position="120"/>
        <end position="125"/>
    </location>
</feature>
<feature type="helix" evidence="20">
    <location>
        <begin position="127"/>
        <end position="129"/>
    </location>
</feature>
<feature type="helix" evidence="20">
    <location>
        <begin position="130"/>
        <end position="139"/>
    </location>
</feature>
<feature type="strand" evidence="20">
    <location>
        <begin position="140"/>
        <end position="142"/>
    </location>
</feature>
<feature type="strand" evidence="20">
    <location>
        <begin position="144"/>
        <end position="148"/>
    </location>
</feature>
<feature type="helix" evidence="20">
    <location>
        <begin position="151"/>
        <end position="153"/>
    </location>
</feature>
<feature type="strand" evidence="20">
    <location>
        <begin position="157"/>
        <end position="159"/>
    </location>
</feature>
<feature type="strand" evidence="20">
    <location>
        <begin position="164"/>
        <end position="166"/>
    </location>
</feature>
<feature type="helix" evidence="20">
    <location>
        <begin position="169"/>
        <end position="176"/>
    </location>
</feature>
<feature type="strand" evidence="20">
    <location>
        <begin position="190"/>
        <end position="194"/>
    </location>
</feature>
<feature type="helix" evidence="20">
    <location>
        <begin position="200"/>
        <end position="213"/>
    </location>
</feature>
<feature type="helix" evidence="20">
    <location>
        <begin position="216"/>
        <end position="220"/>
    </location>
</feature>
<feature type="strand" evidence="20">
    <location>
        <begin position="224"/>
        <end position="230"/>
    </location>
</feature>
<feature type="helix" evidence="20">
    <location>
        <begin position="231"/>
        <end position="237"/>
    </location>
</feature>
<feature type="helix" evidence="20">
    <location>
        <begin position="244"/>
        <end position="246"/>
    </location>
</feature>
<feature type="helix" evidence="20">
    <location>
        <begin position="249"/>
        <end position="257"/>
    </location>
</feature>
<feature type="strand" evidence="20">
    <location>
        <begin position="258"/>
        <end position="267"/>
    </location>
</feature>
<feature type="strand" evidence="20">
    <location>
        <begin position="295"/>
        <end position="303"/>
    </location>
</feature>
<feature type="strand" evidence="20">
    <location>
        <begin position="310"/>
        <end position="312"/>
    </location>
</feature>
<feature type="turn" evidence="20">
    <location>
        <begin position="314"/>
        <end position="316"/>
    </location>
</feature>
<feature type="helix" evidence="20">
    <location>
        <begin position="317"/>
        <end position="329"/>
    </location>
</feature>
<feature type="turn" evidence="20">
    <location>
        <begin position="330"/>
        <end position="332"/>
    </location>
</feature>
<feature type="helix" evidence="20">
    <location>
        <begin position="335"/>
        <end position="339"/>
    </location>
</feature>
<feature type="turn" evidence="20">
    <location>
        <begin position="340"/>
        <end position="342"/>
    </location>
</feature>
<feature type="helix" evidence="20">
    <location>
        <begin position="347"/>
        <end position="353"/>
    </location>
</feature>
<feature type="helix" evidence="20">
    <location>
        <begin position="362"/>
        <end position="364"/>
    </location>
</feature>
<feature type="helix" evidence="20">
    <location>
        <begin position="367"/>
        <end position="379"/>
    </location>
</feature>
<proteinExistence type="evidence at protein level"/>
<name>TFB2M_HUMAN</name>
<sequence length="396" mass="45349">MWIPVVGLPRRLRLSALAGAGRFCILGSEAATRKHLPARNHCGLSDSSPQLWPEPDFRNPPRKASKASLDFKRYVTDRRLAETLAQIYLGKPSRPPHLLLECNPGPGILTQALLEAGAKVVALESDKTFIPHLESLGKNLDGKLRVIHCDFFKLDPRSGGVIKPPAMSSRGLFKNLGIEAVPWTADIPLKVVGMFPSRGEKRALWKLAYDLYSCTSIYKFGRIEVNMFIGEKEFQKLMADPGNPDLYHVLSVIWQLACEIKVLHMEPWSSFDIYTRKGPLENPKRRELLDQLQQKLYLIQMIPRQNLFTKNLTPMNYNIFFHLLKHCFGRRSATVIDHLRSLTPLDARDILMQIGKQEDEKVVNMHPQDFKTLFETIERSKDCAYKWLYDETLEDR</sequence>
<keyword id="KW-0002">3D-structure</keyword>
<keyword id="KW-0489">Methyltransferase</keyword>
<keyword id="KW-0496">Mitochondrion</keyword>
<keyword id="KW-1267">Proteomics identification</keyword>
<keyword id="KW-1185">Reference proteome</keyword>
<keyword id="KW-0694">RNA-binding</keyword>
<keyword id="KW-0698">rRNA processing</keyword>
<keyword id="KW-0949">S-adenosyl-L-methionine</keyword>
<keyword id="KW-0804">Transcription</keyword>
<keyword id="KW-0805">Transcription regulation</keyword>
<keyword id="KW-0808">Transferase</keyword>
<keyword id="KW-0809">Transit peptide</keyword>
<reference key="1">
    <citation type="submission" date="2002-07" db="EMBL/GenBank/DDBJ databases">
        <title>Cloning and identification of human gene 5 transactivated by hepatitis C virus NS5A protein.</title>
        <authorList>
            <person name="Liu Y."/>
            <person name="Cheng J."/>
            <person name="Wang G."/>
            <person name="Wang J."/>
            <person name="Zhang L."/>
            <person name="Chen J."/>
            <person name="Li L."/>
        </authorList>
    </citation>
    <scope>NUCLEOTIDE SEQUENCE [MRNA]</scope>
</reference>
<reference key="2">
    <citation type="journal article" date="2004" name="Nat. Genet.">
        <title>Complete sequencing and characterization of 21,243 full-length human cDNAs.</title>
        <authorList>
            <person name="Ota T."/>
            <person name="Suzuki Y."/>
            <person name="Nishikawa T."/>
            <person name="Otsuki T."/>
            <person name="Sugiyama T."/>
            <person name="Irie R."/>
            <person name="Wakamatsu A."/>
            <person name="Hayashi K."/>
            <person name="Sato H."/>
            <person name="Nagai K."/>
            <person name="Kimura K."/>
            <person name="Makita H."/>
            <person name="Sekine M."/>
            <person name="Obayashi M."/>
            <person name="Nishi T."/>
            <person name="Shibahara T."/>
            <person name="Tanaka T."/>
            <person name="Ishii S."/>
            <person name="Yamamoto J."/>
            <person name="Saito K."/>
            <person name="Kawai Y."/>
            <person name="Isono Y."/>
            <person name="Nakamura Y."/>
            <person name="Nagahari K."/>
            <person name="Murakami K."/>
            <person name="Yasuda T."/>
            <person name="Iwayanagi T."/>
            <person name="Wagatsuma M."/>
            <person name="Shiratori A."/>
            <person name="Sudo H."/>
            <person name="Hosoiri T."/>
            <person name="Kaku Y."/>
            <person name="Kodaira H."/>
            <person name="Kondo H."/>
            <person name="Sugawara M."/>
            <person name="Takahashi M."/>
            <person name="Kanda K."/>
            <person name="Yokoi T."/>
            <person name="Furuya T."/>
            <person name="Kikkawa E."/>
            <person name="Omura Y."/>
            <person name="Abe K."/>
            <person name="Kamihara K."/>
            <person name="Katsuta N."/>
            <person name="Sato K."/>
            <person name="Tanikawa M."/>
            <person name="Yamazaki M."/>
            <person name="Ninomiya K."/>
            <person name="Ishibashi T."/>
            <person name="Yamashita H."/>
            <person name="Murakawa K."/>
            <person name="Fujimori K."/>
            <person name="Tanai H."/>
            <person name="Kimata M."/>
            <person name="Watanabe M."/>
            <person name="Hiraoka S."/>
            <person name="Chiba Y."/>
            <person name="Ishida S."/>
            <person name="Ono Y."/>
            <person name="Takiguchi S."/>
            <person name="Watanabe S."/>
            <person name="Yosida M."/>
            <person name="Hotuta T."/>
            <person name="Kusano J."/>
            <person name="Kanehori K."/>
            <person name="Takahashi-Fujii A."/>
            <person name="Hara H."/>
            <person name="Tanase T.-O."/>
            <person name="Nomura Y."/>
            <person name="Togiya S."/>
            <person name="Komai F."/>
            <person name="Hara R."/>
            <person name="Takeuchi K."/>
            <person name="Arita M."/>
            <person name="Imose N."/>
            <person name="Musashino K."/>
            <person name="Yuuki H."/>
            <person name="Oshima A."/>
            <person name="Sasaki N."/>
            <person name="Aotsuka S."/>
            <person name="Yoshikawa Y."/>
            <person name="Matsunawa H."/>
            <person name="Ichihara T."/>
            <person name="Shiohata N."/>
            <person name="Sano S."/>
            <person name="Moriya S."/>
            <person name="Momiyama H."/>
            <person name="Satoh N."/>
            <person name="Takami S."/>
            <person name="Terashima Y."/>
            <person name="Suzuki O."/>
            <person name="Nakagawa S."/>
            <person name="Senoh A."/>
            <person name="Mizoguchi H."/>
            <person name="Goto Y."/>
            <person name="Shimizu F."/>
            <person name="Wakebe H."/>
            <person name="Hishigaki H."/>
            <person name="Watanabe T."/>
            <person name="Sugiyama A."/>
            <person name="Takemoto M."/>
            <person name="Kawakami B."/>
            <person name="Yamazaki M."/>
            <person name="Watanabe K."/>
            <person name="Kumagai A."/>
            <person name="Itakura S."/>
            <person name="Fukuzumi Y."/>
            <person name="Fujimori Y."/>
            <person name="Komiyama M."/>
            <person name="Tashiro H."/>
            <person name="Tanigami A."/>
            <person name="Fujiwara T."/>
            <person name="Ono T."/>
            <person name="Yamada K."/>
            <person name="Fujii Y."/>
            <person name="Ozaki K."/>
            <person name="Hirao M."/>
            <person name="Ohmori Y."/>
            <person name="Kawabata A."/>
            <person name="Hikiji T."/>
            <person name="Kobatake N."/>
            <person name="Inagaki H."/>
            <person name="Ikema Y."/>
            <person name="Okamoto S."/>
            <person name="Okitani R."/>
            <person name="Kawakami T."/>
            <person name="Noguchi S."/>
            <person name="Itoh T."/>
            <person name="Shigeta K."/>
            <person name="Senba T."/>
            <person name="Matsumura K."/>
            <person name="Nakajima Y."/>
            <person name="Mizuno T."/>
            <person name="Morinaga M."/>
            <person name="Sasaki M."/>
            <person name="Togashi T."/>
            <person name="Oyama M."/>
            <person name="Hata H."/>
            <person name="Watanabe M."/>
            <person name="Komatsu T."/>
            <person name="Mizushima-Sugano J."/>
            <person name="Satoh T."/>
            <person name="Shirai Y."/>
            <person name="Takahashi Y."/>
            <person name="Nakagawa K."/>
            <person name="Okumura K."/>
            <person name="Nagase T."/>
            <person name="Nomura N."/>
            <person name="Kikuchi H."/>
            <person name="Masuho Y."/>
            <person name="Yamashita R."/>
            <person name="Nakai K."/>
            <person name="Yada T."/>
            <person name="Nakamura Y."/>
            <person name="Ohara O."/>
            <person name="Isogai T."/>
            <person name="Sugano S."/>
        </authorList>
    </citation>
    <scope>NUCLEOTIDE SEQUENCE [LARGE SCALE MRNA]</scope>
    <source>
        <tissue>Lung</tissue>
        <tissue>Small intestine</tissue>
    </source>
</reference>
<reference key="3">
    <citation type="journal article" date="2006" name="Nature">
        <title>The DNA sequence and biological annotation of human chromosome 1.</title>
        <authorList>
            <person name="Gregory S.G."/>
            <person name="Barlow K.F."/>
            <person name="McLay K.E."/>
            <person name="Kaul R."/>
            <person name="Swarbreck D."/>
            <person name="Dunham A."/>
            <person name="Scott C.E."/>
            <person name="Howe K.L."/>
            <person name="Woodfine K."/>
            <person name="Spencer C.C.A."/>
            <person name="Jones M.C."/>
            <person name="Gillson C."/>
            <person name="Searle S."/>
            <person name="Zhou Y."/>
            <person name="Kokocinski F."/>
            <person name="McDonald L."/>
            <person name="Evans R."/>
            <person name="Phillips K."/>
            <person name="Atkinson A."/>
            <person name="Cooper R."/>
            <person name="Jones C."/>
            <person name="Hall R.E."/>
            <person name="Andrews T.D."/>
            <person name="Lloyd C."/>
            <person name="Ainscough R."/>
            <person name="Almeida J.P."/>
            <person name="Ambrose K.D."/>
            <person name="Anderson F."/>
            <person name="Andrew R.W."/>
            <person name="Ashwell R.I.S."/>
            <person name="Aubin K."/>
            <person name="Babbage A.K."/>
            <person name="Bagguley C.L."/>
            <person name="Bailey J."/>
            <person name="Beasley H."/>
            <person name="Bethel G."/>
            <person name="Bird C.P."/>
            <person name="Bray-Allen S."/>
            <person name="Brown J.Y."/>
            <person name="Brown A.J."/>
            <person name="Buckley D."/>
            <person name="Burton J."/>
            <person name="Bye J."/>
            <person name="Carder C."/>
            <person name="Chapman J.C."/>
            <person name="Clark S.Y."/>
            <person name="Clarke G."/>
            <person name="Clee C."/>
            <person name="Cobley V."/>
            <person name="Collier R.E."/>
            <person name="Corby N."/>
            <person name="Coville G.J."/>
            <person name="Davies J."/>
            <person name="Deadman R."/>
            <person name="Dunn M."/>
            <person name="Earthrowl M."/>
            <person name="Ellington A.G."/>
            <person name="Errington H."/>
            <person name="Frankish A."/>
            <person name="Frankland J."/>
            <person name="French L."/>
            <person name="Garner P."/>
            <person name="Garnett J."/>
            <person name="Gay L."/>
            <person name="Ghori M.R.J."/>
            <person name="Gibson R."/>
            <person name="Gilby L.M."/>
            <person name="Gillett W."/>
            <person name="Glithero R.J."/>
            <person name="Grafham D.V."/>
            <person name="Griffiths C."/>
            <person name="Griffiths-Jones S."/>
            <person name="Grocock R."/>
            <person name="Hammond S."/>
            <person name="Harrison E.S.I."/>
            <person name="Hart E."/>
            <person name="Haugen E."/>
            <person name="Heath P.D."/>
            <person name="Holmes S."/>
            <person name="Holt K."/>
            <person name="Howden P.J."/>
            <person name="Hunt A.R."/>
            <person name="Hunt S.E."/>
            <person name="Hunter G."/>
            <person name="Isherwood J."/>
            <person name="James R."/>
            <person name="Johnson C."/>
            <person name="Johnson D."/>
            <person name="Joy A."/>
            <person name="Kay M."/>
            <person name="Kershaw J.K."/>
            <person name="Kibukawa M."/>
            <person name="Kimberley A.M."/>
            <person name="King A."/>
            <person name="Knights A.J."/>
            <person name="Lad H."/>
            <person name="Laird G."/>
            <person name="Lawlor S."/>
            <person name="Leongamornlert D.A."/>
            <person name="Lloyd D.M."/>
            <person name="Loveland J."/>
            <person name="Lovell J."/>
            <person name="Lush M.J."/>
            <person name="Lyne R."/>
            <person name="Martin S."/>
            <person name="Mashreghi-Mohammadi M."/>
            <person name="Matthews L."/>
            <person name="Matthews N.S.W."/>
            <person name="McLaren S."/>
            <person name="Milne S."/>
            <person name="Mistry S."/>
            <person name="Moore M.J.F."/>
            <person name="Nickerson T."/>
            <person name="O'Dell C.N."/>
            <person name="Oliver K."/>
            <person name="Palmeiri A."/>
            <person name="Palmer S.A."/>
            <person name="Parker A."/>
            <person name="Patel D."/>
            <person name="Pearce A.V."/>
            <person name="Peck A.I."/>
            <person name="Pelan S."/>
            <person name="Phelps K."/>
            <person name="Phillimore B.J."/>
            <person name="Plumb R."/>
            <person name="Rajan J."/>
            <person name="Raymond C."/>
            <person name="Rouse G."/>
            <person name="Saenphimmachak C."/>
            <person name="Sehra H.K."/>
            <person name="Sheridan E."/>
            <person name="Shownkeen R."/>
            <person name="Sims S."/>
            <person name="Skuce C.D."/>
            <person name="Smith M."/>
            <person name="Steward C."/>
            <person name="Subramanian S."/>
            <person name="Sycamore N."/>
            <person name="Tracey A."/>
            <person name="Tromans A."/>
            <person name="Van Helmond Z."/>
            <person name="Wall M."/>
            <person name="Wallis J.M."/>
            <person name="White S."/>
            <person name="Whitehead S.L."/>
            <person name="Wilkinson J.E."/>
            <person name="Willey D.L."/>
            <person name="Williams H."/>
            <person name="Wilming L."/>
            <person name="Wray P.W."/>
            <person name="Wu Z."/>
            <person name="Coulson A."/>
            <person name="Vaudin M."/>
            <person name="Sulston J.E."/>
            <person name="Durbin R.M."/>
            <person name="Hubbard T."/>
            <person name="Wooster R."/>
            <person name="Dunham I."/>
            <person name="Carter N.P."/>
            <person name="McVean G."/>
            <person name="Ross M.T."/>
            <person name="Harrow J."/>
            <person name="Olson M.V."/>
            <person name="Beck S."/>
            <person name="Rogers J."/>
            <person name="Bentley D.R."/>
        </authorList>
    </citation>
    <scope>NUCLEOTIDE SEQUENCE [LARGE SCALE GENOMIC DNA]</scope>
</reference>
<reference key="4">
    <citation type="journal article" date="2004" name="Genome Res.">
        <title>The status, quality, and expansion of the NIH full-length cDNA project: the Mammalian Gene Collection (MGC).</title>
        <authorList>
            <consortium name="The MGC Project Team"/>
        </authorList>
    </citation>
    <scope>NUCLEOTIDE SEQUENCE [LARGE SCALE MRNA]</scope>
    <source>
        <tissue>Placenta</tissue>
    </source>
</reference>
<reference key="5">
    <citation type="journal article" date="2002" name="Nat. Genet.">
        <title>Mitochondrial transcription factors B1 and B2 activate transcription of human mtDNA.</title>
        <authorList>
            <person name="Falkenberg M."/>
            <person name="Gaspari M."/>
            <person name="Rantanen A."/>
            <person name="Trifunovic A."/>
            <person name="Larsson N.-G."/>
            <person name="Gustafsson C.M."/>
        </authorList>
    </citation>
    <scope>FUNCTION</scope>
    <scope>TISSUE SPECIFICITY</scope>
    <scope>INTERACTION WITH POLRMT</scope>
</reference>
<reference key="6">
    <citation type="journal article" date="2003" name="Mol. Cell. Biol.">
        <title>Human mitochondrial transcription factor B1 interacts with the C-terminal activation region of h-mtTFA and stimulates transcription independently of its RNA methyltransferase activity.</title>
        <authorList>
            <person name="McCulloch V."/>
            <person name="Shadel G.S."/>
        </authorList>
    </citation>
    <scope>FUNCTION</scope>
    <scope>INTERACTION WITH TFAM</scope>
    <scope>SAM-BINDING</scope>
</reference>
<reference key="7">
    <citation type="journal article" date="2004" name="EMBO J.">
        <title>The mitochondrial RNA polymerase contributes critically to promoter specificity in mammalian cells.</title>
        <authorList>
            <person name="Gaspari M."/>
            <person name="Falkenberg M."/>
            <person name="Larsson N.-G."/>
            <person name="Gustafsson C.M."/>
        </authorList>
    </citation>
    <scope>FUNCTION</scope>
</reference>
<reference key="8">
    <citation type="journal article" date="2005" name="Mol. Cell. Biol.">
        <title>Control of mitochondrial transcription specificity factors (TFB1M and TFB2M) by nuclear respiratory factors (NRF-1 and NRF-2) and PGC-1 family coactivators.</title>
        <authorList>
            <person name="Gleyzer N."/>
            <person name="Vercauteren K."/>
            <person name="Scarpulla R.C."/>
        </authorList>
    </citation>
    <scope>INDUCTION</scope>
</reference>
<reference key="9">
    <citation type="journal article" date="2006" name="J. Mol. Evol.">
        <title>Evidence for an early gene duplication event in the evolution of the mitochondrial transcription factor B family and maintenance of rRNA methyltransferase activity in human mtTFB1 and mtTFB2.</title>
        <authorList>
            <person name="Cotney J."/>
            <person name="Shadel G.S."/>
        </authorList>
    </citation>
    <scope>ENZYME ACTIVITY</scope>
    <scope>MUTAGENESIS OF GLY-105</scope>
    <scope>FUNCTION</scope>
</reference>
<reference key="10">
    <citation type="journal article" date="2010" name="J. Biol. Chem.">
        <title>Human mitochondrial transcription revisited: only TFAM and TFB2M are required for transcription of the mitochondrial genes in vitro.</title>
        <authorList>
            <person name="Litonin D."/>
            <person name="Sologub M."/>
            <person name="Shi Y."/>
            <person name="Savkina M."/>
            <person name="Anikin M."/>
            <person name="Falkenberg M."/>
            <person name="Gustafsson C.M."/>
            <person name="Temiakov D."/>
        </authorList>
    </citation>
    <scope>FUNCTION</scope>
</reference>
<reference key="11">
    <citation type="journal article" date="2011" name="BMC Syst. Biol.">
        <title>Initial characterization of the human central proteome.</title>
        <authorList>
            <person name="Burkard T.R."/>
            <person name="Planyavsky M."/>
            <person name="Kaupe I."/>
            <person name="Breitwieser F.P."/>
            <person name="Buerckstuemmer T."/>
            <person name="Bennett K.L."/>
            <person name="Superti-Furga G."/>
            <person name="Colinge J."/>
        </authorList>
    </citation>
    <scope>IDENTIFICATION BY MASS SPECTROMETRY [LARGE SCALE ANALYSIS]</scope>
</reference>
<reference evidence="17 18 19" key="12">
    <citation type="journal article" date="2017" name="Cell">
        <title>Structural Basis of Mitochondrial Transcription Initiation.</title>
        <authorList>
            <person name="Hillen H.S."/>
            <person name="Morozov Y.I."/>
            <person name="Sarfallah A."/>
            <person name="Temiakov D."/>
            <person name="Cramer P."/>
        </authorList>
    </citation>
    <scope>X-RAY CRYSTALLOGRAPHY (1.75 ANGSTROMS) OF 63-267 AND 295-396 IN COMPLEX WITH POLRMT; TFAM AND DNA</scope>
    <scope>SUBUNIT</scope>
    <scope>MUTAGENESIS OF ARG-330 AND ARG-331</scope>
    <scope>REGION</scope>
    <scope>FUNCTION</scope>
</reference>
<reference key="13">
    <citation type="journal article" date="2008" name="Dis. Markers">
        <title>Mitochondrial transcription factors TFA, TFB1 and TFB2: a search for DNA variants/haplotypes and the risk of cardiac hypertrophy.</title>
        <authorList>
            <person name="Alonso-Montes C."/>
            <person name="Castro M.G."/>
            <person name="Reguero J.R."/>
            <person name="Perrot A."/>
            <person name="Ozcelik C."/>
            <person name="Geier C."/>
            <person name="Posch M.G."/>
            <person name="Moris C."/>
            <person name="Alvarez V."/>
            <person name="Ruiz-Ortega M."/>
            <person name="Coto E."/>
        </authorList>
    </citation>
    <scope>VARIANTS THR-64 AND TYR-264</scope>
</reference>
<reference key="14">
    <citation type="journal article" date="2009" name="Parkinsonism Relat. Disord.">
        <title>Mutational screening of the mitochondrial transcription factors B1 and B2 (TFB1M and TFB2M) in Parkinson's disease.</title>
        <authorList>
            <person name="Sanchez-Ferrero E."/>
            <person name="Coto E."/>
            <person name="Blazquez M."/>
            <person name="Ribacoba R."/>
            <person name="Guisasola L.M."/>
            <person name="Salvador C."/>
            <person name="Alvarez V."/>
        </authorList>
    </citation>
    <scope>VARIANTS PHE-48 AND THR-64</scope>
</reference>
<organism>
    <name type="scientific">Homo sapiens</name>
    <name type="common">Human</name>
    <dbReference type="NCBI Taxonomy" id="9606"/>
    <lineage>
        <taxon>Eukaryota</taxon>
        <taxon>Metazoa</taxon>
        <taxon>Chordata</taxon>
        <taxon>Craniata</taxon>
        <taxon>Vertebrata</taxon>
        <taxon>Euteleostomi</taxon>
        <taxon>Mammalia</taxon>
        <taxon>Eutheria</taxon>
        <taxon>Euarchontoglires</taxon>
        <taxon>Primates</taxon>
        <taxon>Haplorrhini</taxon>
        <taxon>Catarrhini</taxon>
        <taxon>Hominidae</taxon>
        <taxon>Homo</taxon>
    </lineage>
</organism>
<dbReference type="EC" id="2.1.1.-" evidence="15"/>
<dbReference type="EMBL" id="AF529366">
    <property type="protein sequence ID" value="AAQ09600.1"/>
    <property type="molecule type" value="mRNA"/>
</dbReference>
<dbReference type="EMBL" id="AK026314">
    <property type="protein sequence ID" value="BAB15441.1"/>
    <property type="status" value="ALT_INIT"/>
    <property type="molecule type" value="mRNA"/>
</dbReference>
<dbReference type="EMBL" id="AK026835">
    <property type="protein sequence ID" value="BAB15566.1"/>
    <property type="molecule type" value="mRNA"/>
</dbReference>
<dbReference type="EMBL" id="AL356583">
    <property type="status" value="NOT_ANNOTATED_CDS"/>
    <property type="molecule type" value="Genomic_DNA"/>
</dbReference>
<dbReference type="EMBL" id="BC003383">
    <property type="protein sequence ID" value="AAH03383.1"/>
    <property type="molecule type" value="mRNA"/>
</dbReference>
<dbReference type="CCDS" id="CCDS1627.1"/>
<dbReference type="RefSeq" id="NP_071761.1">
    <property type="nucleotide sequence ID" value="NM_022366.3"/>
</dbReference>
<dbReference type="PDB" id="6ERO">
    <property type="method" value="X-ray"/>
    <property type="resolution" value="1.75 A"/>
    <property type="chains" value="A/B=63-267, A/B=295-396"/>
</dbReference>
<dbReference type="PDB" id="6ERP">
    <property type="method" value="X-ray"/>
    <property type="resolution" value="4.50 A"/>
    <property type="chains" value="F/J=21-396"/>
</dbReference>
<dbReference type="PDB" id="6ERQ">
    <property type="method" value="X-ray"/>
    <property type="resolution" value="4.50 A"/>
    <property type="chains" value="F/J=22-396"/>
</dbReference>
<dbReference type="PDBsum" id="6ERO"/>
<dbReference type="PDBsum" id="6ERP"/>
<dbReference type="PDBsum" id="6ERQ"/>
<dbReference type="EMDB" id="EMD-2529"/>
<dbReference type="SMR" id="Q9H5Q4"/>
<dbReference type="BioGRID" id="122106">
    <property type="interactions" value="122"/>
</dbReference>
<dbReference type="ComplexPortal" id="CPX-7241">
    <property type="entry name" value="Mitochondrial transcription initiation complex"/>
</dbReference>
<dbReference type="DIP" id="DIP-50540N"/>
<dbReference type="FunCoup" id="Q9H5Q4">
    <property type="interactions" value="1200"/>
</dbReference>
<dbReference type="IntAct" id="Q9H5Q4">
    <property type="interactions" value="72"/>
</dbReference>
<dbReference type="MINT" id="Q9H5Q4"/>
<dbReference type="STRING" id="9606.ENSP00000355471"/>
<dbReference type="GlyGen" id="Q9H5Q4">
    <property type="glycosylation" value="1 site, 1 O-linked glycan (1 site)"/>
</dbReference>
<dbReference type="iPTMnet" id="Q9H5Q4"/>
<dbReference type="MetOSite" id="Q9H5Q4"/>
<dbReference type="PhosphoSitePlus" id="Q9H5Q4"/>
<dbReference type="SwissPalm" id="Q9H5Q4"/>
<dbReference type="BioMuta" id="TFB2M"/>
<dbReference type="DMDM" id="74752681"/>
<dbReference type="jPOST" id="Q9H5Q4"/>
<dbReference type="MassIVE" id="Q9H5Q4"/>
<dbReference type="PaxDb" id="9606-ENSP00000355471"/>
<dbReference type="PeptideAtlas" id="Q9H5Q4"/>
<dbReference type="ProteomicsDB" id="80926"/>
<dbReference type="Pumba" id="Q9H5Q4"/>
<dbReference type="Antibodypedia" id="34721">
    <property type="antibodies" value="252 antibodies from 28 providers"/>
</dbReference>
<dbReference type="DNASU" id="64216"/>
<dbReference type="Ensembl" id="ENST00000366514.5">
    <property type="protein sequence ID" value="ENSP00000355471.4"/>
    <property type="gene ID" value="ENSG00000162851.8"/>
</dbReference>
<dbReference type="GeneID" id="64216"/>
<dbReference type="KEGG" id="hsa:64216"/>
<dbReference type="MANE-Select" id="ENST00000366514.5">
    <property type="protein sequence ID" value="ENSP00000355471.4"/>
    <property type="RefSeq nucleotide sequence ID" value="NM_022366.3"/>
    <property type="RefSeq protein sequence ID" value="NP_071761.1"/>
</dbReference>
<dbReference type="UCSC" id="uc001ibn.4">
    <property type="organism name" value="human"/>
</dbReference>
<dbReference type="AGR" id="HGNC:18559"/>
<dbReference type="CTD" id="64216"/>
<dbReference type="DisGeNET" id="64216"/>
<dbReference type="GeneCards" id="TFB2M"/>
<dbReference type="HGNC" id="HGNC:18559">
    <property type="gene designation" value="TFB2M"/>
</dbReference>
<dbReference type="HPA" id="ENSG00000162851">
    <property type="expression patterns" value="Low tissue specificity"/>
</dbReference>
<dbReference type="MIM" id="607055">
    <property type="type" value="gene"/>
</dbReference>
<dbReference type="neXtProt" id="NX_Q9H5Q4"/>
<dbReference type="OpenTargets" id="ENSG00000162851"/>
<dbReference type="PharmGKB" id="PA38348"/>
<dbReference type="VEuPathDB" id="HostDB:ENSG00000162851"/>
<dbReference type="eggNOG" id="KOG0820">
    <property type="taxonomic scope" value="Eukaryota"/>
</dbReference>
<dbReference type="GeneTree" id="ENSGT00950000183142"/>
<dbReference type="HOGENOM" id="CLU_051778_1_0_1"/>
<dbReference type="InParanoid" id="Q9H5Q4"/>
<dbReference type="OMA" id="IFEVPWT"/>
<dbReference type="OrthoDB" id="9895503at2759"/>
<dbReference type="PAN-GO" id="Q9H5Q4">
    <property type="GO annotations" value="5 GO annotations based on evolutionary models"/>
</dbReference>
<dbReference type="PhylomeDB" id="Q9H5Q4"/>
<dbReference type="TreeFam" id="TF325100"/>
<dbReference type="PathwayCommons" id="Q9H5Q4"/>
<dbReference type="Reactome" id="R-HSA-163282">
    <property type="pathway name" value="Mitochondrial transcription initiation"/>
</dbReference>
<dbReference type="Reactome" id="R-HSA-2151201">
    <property type="pathway name" value="Transcriptional activation of mitochondrial biogenesis"/>
</dbReference>
<dbReference type="SignaLink" id="Q9H5Q4"/>
<dbReference type="SIGNOR" id="Q9H5Q4"/>
<dbReference type="BioGRID-ORCS" id="64216">
    <property type="hits" value="417 hits in 1148 CRISPR screens"/>
</dbReference>
<dbReference type="CD-CODE" id="5965E019">
    <property type="entry name" value="mtRNA granule"/>
</dbReference>
<dbReference type="ChiTaRS" id="TFB2M">
    <property type="organism name" value="human"/>
</dbReference>
<dbReference type="GeneWiki" id="TFB2M"/>
<dbReference type="GenomeRNAi" id="64216"/>
<dbReference type="Pharos" id="Q9H5Q4">
    <property type="development level" value="Tbio"/>
</dbReference>
<dbReference type="PRO" id="PR:Q9H5Q4"/>
<dbReference type="Proteomes" id="UP000005640">
    <property type="component" value="Chromosome 1"/>
</dbReference>
<dbReference type="RNAct" id="Q9H5Q4">
    <property type="molecule type" value="protein"/>
</dbReference>
<dbReference type="Bgee" id="ENSG00000162851">
    <property type="expression patterns" value="Expressed in secondary oocyte and 192 other cell types or tissues"/>
</dbReference>
<dbReference type="GO" id="GO:0005759">
    <property type="term" value="C:mitochondrial matrix"/>
    <property type="evidence" value="ECO:0000314"/>
    <property type="project" value="UniProtKB"/>
</dbReference>
<dbReference type="GO" id="GO:0042645">
    <property type="term" value="C:mitochondrial nucleoid"/>
    <property type="evidence" value="ECO:0000314"/>
    <property type="project" value="BHF-UCL"/>
</dbReference>
<dbReference type="GO" id="GO:0005739">
    <property type="term" value="C:mitochondrion"/>
    <property type="evidence" value="ECO:0000314"/>
    <property type="project" value="HPA"/>
</dbReference>
<dbReference type="GO" id="GO:0034246">
    <property type="term" value="F:mitochondrial transcription factor activity"/>
    <property type="evidence" value="ECO:0000314"/>
    <property type="project" value="GO_Central"/>
</dbReference>
<dbReference type="GO" id="GO:0003723">
    <property type="term" value="F:RNA binding"/>
    <property type="evidence" value="ECO:0007005"/>
    <property type="project" value="UniProtKB"/>
</dbReference>
<dbReference type="GO" id="GO:0000179">
    <property type="term" value="F:rRNA (adenine-N6,N6-)-dimethyltransferase activity"/>
    <property type="evidence" value="ECO:0000318"/>
    <property type="project" value="GO_Central"/>
</dbReference>
<dbReference type="GO" id="GO:0008988">
    <property type="term" value="F:rRNA (adenine-N6-)-methyltransferase activity"/>
    <property type="evidence" value="ECO:0007669"/>
    <property type="project" value="RHEA"/>
</dbReference>
<dbReference type="GO" id="GO:0006390">
    <property type="term" value="P:mitochondrial transcription"/>
    <property type="evidence" value="ECO:0000314"/>
    <property type="project" value="GO_Central"/>
</dbReference>
<dbReference type="GO" id="GO:0031167">
    <property type="term" value="P:rRNA methylation"/>
    <property type="evidence" value="ECO:0000318"/>
    <property type="project" value="GO_Central"/>
</dbReference>
<dbReference type="GO" id="GO:0006391">
    <property type="term" value="P:transcription initiation at mitochondrial promoter"/>
    <property type="evidence" value="ECO:0000314"/>
    <property type="project" value="UniProtKB"/>
</dbReference>
<dbReference type="CDD" id="cd02440">
    <property type="entry name" value="AdoMet_MTases"/>
    <property type="match status" value="1"/>
</dbReference>
<dbReference type="FunFam" id="3.40.50.150:FF:000209">
    <property type="entry name" value="rRNA adenine N(6)-methyltransferase"/>
    <property type="match status" value="1"/>
</dbReference>
<dbReference type="Gene3D" id="3.40.50.150">
    <property type="entry name" value="Vaccinia Virus protein VP39"/>
    <property type="match status" value="1"/>
</dbReference>
<dbReference type="InterPro" id="IPR001737">
    <property type="entry name" value="KsgA/Erm"/>
</dbReference>
<dbReference type="InterPro" id="IPR020598">
    <property type="entry name" value="rRNA_Ade_methylase_Trfase_N"/>
</dbReference>
<dbReference type="InterPro" id="IPR029063">
    <property type="entry name" value="SAM-dependent_MTases_sf"/>
</dbReference>
<dbReference type="PANTHER" id="PTHR11727">
    <property type="entry name" value="DIMETHYLADENOSINE TRANSFERASE"/>
    <property type="match status" value="1"/>
</dbReference>
<dbReference type="PANTHER" id="PTHR11727:SF13">
    <property type="entry name" value="DIMETHYLADENOSINE TRANSFERASE 2, MITOCHONDRIAL"/>
    <property type="match status" value="1"/>
</dbReference>
<dbReference type="Pfam" id="PF00398">
    <property type="entry name" value="RrnaAD"/>
    <property type="match status" value="1"/>
</dbReference>
<dbReference type="PIRSF" id="PIRSF027833">
    <property type="entry name" value="MtTFB2"/>
    <property type="match status" value="1"/>
</dbReference>
<dbReference type="SMART" id="SM00650">
    <property type="entry name" value="rADc"/>
    <property type="match status" value="1"/>
</dbReference>
<dbReference type="SUPFAM" id="SSF53335">
    <property type="entry name" value="S-adenosyl-L-methionine-dependent methyltransferases"/>
    <property type="match status" value="1"/>
</dbReference>
<dbReference type="PROSITE" id="PS51689">
    <property type="entry name" value="SAM_RNA_A_N6_MT"/>
    <property type="match status" value="1"/>
</dbReference>
<accession>Q9H5Q4</accession>
<accession>Q9H626</accession>
<protein>
    <recommendedName>
        <fullName evidence="13">Dimethyladenosine transferase 2, mitochondrial</fullName>
        <ecNumber evidence="15">2.1.1.-</ecNumber>
    </recommendedName>
    <alternativeName>
        <fullName>Hepatitis C virus NS5A-transactivated protein 5</fullName>
        <shortName>HCV NS5A-transactivated protein 5</shortName>
    </alternativeName>
    <alternativeName>
        <fullName>Mitochondrial 12S rRNA dimethylase 2</fullName>
    </alternativeName>
    <alternativeName>
        <fullName>Mitochondrial transcription factor B2</fullName>
        <shortName>h-mtTFB</shortName>
        <shortName>h-mtTFB2</shortName>
        <shortName>hTFB2M</shortName>
        <shortName>mtTFB2</shortName>
    </alternativeName>
    <alternativeName>
        <fullName>S-adenosylmethionine-6-N', N'-adenosyl(rRNA) dimethyltransferase 2</fullName>
    </alternativeName>
</protein>
<gene>
    <name evidence="16" type="primary">TFB2M</name>
    <name type="synonym">NS5ATP5</name>
</gene>
<evidence type="ECO:0000255" key="1"/>
<evidence type="ECO:0000255" key="2">
    <source>
        <dbReference type="PROSITE-ProRule" id="PRU01026"/>
    </source>
</evidence>
<evidence type="ECO:0000256" key="3">
    <source>
        <dbReference type="SAM" id="MobiDB-lite"/>
    </source>
</evidence>
<evidence type="ECO:0000269" key="4">
    <source>
    </source>
</evidence>
<evidence type="ECO:0000269" key="5">
    <source>
    </source>
</evidence>
<evidence type="ECO:0000269" key="6">
    <source>
    </source>
</evidence>
<evidence type="ECO:0000269" key="7">
    <source>
    </source>
</evidence>
<evidence type="ECO:0000269" key="8">
    <source>
    </source>
</evidence>
<evidence type="ECO:0000269" key="9">
    <source>
    </source>
</evidence>
<evidence type="ECO:0000269" key="10">
    <source>
    </source>
</evidence>
<evidence type="ECO:0000269" key="11">
    <source>
    </source>
</evidence>
<evidence type="ECO:0000269" key="12">
    <source>
    </source>
</evidence>
<evidence type="ECO:0000305" key="13"/>
<evidence type="ECO:0000305" key="14">
    <source>
    </source>
</evidence>
<evidence type="ECO:0000305" key="15">
    <source>
    </source>
</evidence>
<evidence type="ECO:0000312" key="16">
    <source>
        <dbReference type="HGNC" id="HGNC:18559"/>
    </source>
</evidence>
<evidence type="ECO:0007744" key="17">
    <source>
        <dbReference type="PDB" id="6ERO"/>
    </source>
</evidence>
<evidence type="ECO:0007744" key="18">
    <source>
        <dbReference type="PDB" id="6ERP"/>
    </source>
</evidence>
<evidence type="ECO:0007744" key="19">
    <source>
        <dbReference type="PDB" id="6ERQ"/>
    </source>
</evidence>
<evidence type="ECO:0007829" key="20">
    <source>
        <dbReference type="PDB" id="6ERO"/>
    </source>
</evidence>